<protein>
    <recommendedName>
        <fullName>Bradykinin-potentiating peptide 12d</fullName>
        <shortName>BPP-12d</shortName>
    </recommendedName>
</protein>
<accession>P0DKZ2</accession>
<keyword id="KW-0903">Direct protein sequencing</keyword>
<keyword id="KW-0382">Hypotensive agent</keyword>
<keyword id="KW-0481">Metalloenzyme inhibitor</keyword>
<keyword id="KW-0483">Metalloprotease inhibitor</keyword>
<keyword id="KW-0646">Protease inhibitor</keyword>
<keyword id="KW-0873">Pyrrolidone carboxylic acid</keyword>
<keyword id="KW-0964">Secreted</keyword>
<keyword id="KW-0800">Toxin</keyword>
<feature type="peptide" id="PRO_0000421900" description="Bradykinin-potentiating peptide 12d">
    <location>
        <begin position="1"/>
        <end position="12"/>
    </location>
</feature>
<feature type="modified residue" description="Pyrrolidone carboxylic acid" evidence="2">
    <location>
        <position position="1"/>
    </location>
</feature>
<reference key="1">
    <citation type="journal article" date="2012" name="Mol. Cell. Proteomics">
        <title>Peptidomics of three Bothrops snake venoms: insights into the molecular diversification of proteomes and peptidomes.</title>
        <authorList>
            <person name="Tashima A.K."/>
            <person name="Zelanis A."/>
            <person name="Kitano E.S."/>
            <person name="Ianzer D."/>
            <person name="Melo R.L."/>
            <person name="Rioli V."/>
            <person name="Sant'anna S.S."/>
            <person name="Schenberg A.C."/>
            <person name="Camargo A.C."/>
            <person name="Serrano S.M.T."/>
        </authorList>
    </citation>
    <scope>PROTEIN SEQUENCE</scope>
    <scope>FUNCTION</scope>
    <scope>PYROGLUTAMATE FORMATION AT GLN-1</scope>
    <scope>MASS SPECTROMETRY</scope>
    <source>
        <tissue>Venom</tissue>
    </source>
</reference>
<sequence>QNWPHPPMPPAP</sequence>
<name>BPPCD_BOTCO</name>
<comment type="function">
    <text evidence="1 2">This peptide both inhibits the activity of the angiotensin-converting enzyme (ACE) and enhances the action of bradykinin by inhibiting the peptidases that inactivate it. It acts as an indirect hypotensive agent (By similarity).</text>
</comment>
<comment type="subcellular location">
    <subcellularLocation>
        <location>Secreted</location>
    </subcellularLocation>
</comment>
<comment type="tissue specificity">
    <text>Expressed by the venom gland.</text>
</comment>
<comment type="mass spectrometry"/>
<comment type="similarity">
    <text evidence="3">Belongs to the bradykinin-potentiating peptide family.</text>
</comment>
<evidence type="ECO:0000250" key="1"/>
<evidence type="ECO:0000269" key="2">
    <source>
    </source>
</evidence>
<evidence type="ECO:0000305" key="3"/>
<dbReference type="GO" id="GO:0005576">
    <property type="term" value="C:extracellular region"/>
    <property type="evidence" value="ECO:0007669"/>
    <property type="project" value="UniProtKB-SubCell"/>
</dbReference>
<dbReference type="GO" id="GO:0030414">
    <property type="term" value="F:peptidase inhibitor activity"/>
    <property type="evidence" value="ECO:0007669"/>
    <property type="project" value="UniProtKB-KW"/>
</dbReference>
<dbReference type="GO" id="GO:0090729">
    <property type="term" value="F:toxin activity"/>
    <property type="evidence" value="ECO:0007669"/>
    <property type="project" value="UniProtKB-KW"/>
</dbReference>
<dbReference type="GO" id="GO:0008217">
    <property type="term" value="P:regulation of blood pressure"/>
    <property type="evidence" value="ECO:0007669"/>
    <property type="project" value="UniProtKB-KW"/>
</dbReference>
<proteinExistence type="evidence at protein level"/>
<organism>
    <name type="scientific">Bothrops cotiara</name>
    <name type="common">Cotiara</name>
    <name type="synonym">Rhinocerophis cotiara</name>
    <dbReference type="NCBI Taxonomy" id="8727"/>
    <lineage>
        <taxon>Eukaryota</taxon>
        <taxon>Metazoa</taxon>
        <taxon>Chordata</taxon>
        <taxon>Craniata</taxon>
        <taxon>Vertebrata</taxon>
        <taxon>Euteleostomi</taxon>
        <taxon>Lepidosauria</taxon>
        <taxon>Squamata</taxon>
        <taxon>Bifurcata</taxon>
        <taxon>Unidentata</taxon>
        <taxon>Episquamata</taxon>
        <taxon>Toxicofera</taxon>
        <taxon>Serpentes</taxon>
        <taxon>Colubroidea</taxon>
        <taxon>Viperidae</taxon>
        <taxon>Crotalinae</taxon>
        <taxon>Bothrops</taxon>
    </lineage>
</organism>